<keyword id="KW-0963">Cytoplasm</keyword>
<keyword id="KW-0369">Histidine metabolism</keyword>
<keyword id="KW-0456">Lyase</keyword>
<keyword id="KW-0520">NAD</keyword>
<comment type="function">
    <text evidence="1">Catalyzes the conversion of urocanate to 4-imidazolone-5-propionate.</text>
</comment>
<comment type="catalytic activity">
    <reaction evidence="1">
        <text>4-imidazolone-5-propanoate = trans-urocanate + H2O</text>
        <dbReference type="Rhea" id="RHEA:13101"/>
        <dbReference type="ChEBI" id="CHEBI:15377"/>
        <dbReference type="ChEBI" id="CHEBI:17771"/>
        <dbReference type="ChEBI" id="CHEBI:77893"/>
        <dbReference type="EC" id="4.2.1.49"/>
    </reaction>
</comment>
<comment type="cofactor">
    <cofactor evidence="1">
        <name>NAD(+)</name>
        <dbReference type="ChEBI" id="CHEBI:57540"/>
    </cofactor>
    <text evidence="1">Binds 1 NAD(+) per subunit.</text>
</comment>
<comment type="pathway">
    <text evidence="1">Amino-acid degradation; L-histidine degradation into L-glutamate; N-formimidoyl-L-glutamate from L-histidine: step 2/3.</text>
</comment>
<comment type="subcellular location">
    <subcellularLocation>
        <location evidence="1">Cytoplasm</location>
    </subcellularLocation>
</comment>
<comment type="similarity">
    <text evidence="1">Belongs to the urocanase family.</text>
</comment>
<name>HUTU_PSE14</name>
<sequence length="565" mass="61760">MTENNQDLKQNWTRHREGVVQAACGTQLTAKSWLTEAPLRMLMNNLDPEVAENPNELVVYGGIGRAARNWECYDKIVESLTQLNDDETLLVQSGKPVGVFKTHSNAPRVLIANSNLVPHWASWEHFNELDAKGLAMYGQMTAGSWIYIGSQGIVQGTYETFVEAGRQHYDGNLKGRWVLTAGLGGMGGAQPLAATLAGACSLNIECQQSRIDFRIKTRYVDEQAADLDDALARIAKYTAEGKAISIALCGNAAEILPEMVRRGVRPDMVTDQTSAHDPLNGYLPKGWTWDEYRVRSVSEPANVVKAAKQSMAEHVEAMLAFQQAGIPTFDYGNNIRQMAKEVGVANAFDFPGFVPAYIRPLFCRGIGPFRWAALSGDPEDIYKTDAKVKELIPDDDHLHNWLDMARERISFQGLPARICWVGLGQRAKLGLAFNEMVRSGELSAPVVIGRDHLDSGSVASPNRETESMRDGSDAVSDWPLLNALLNTASGATWVSLHHGGGVGMGFSQHSGMVIVCDGTDEAAERIARVLHNDPATGVMRHADAGYDIAIDCAREQGLNLPMIGR</sequence>
<protein>
    <recommendedName>
        <fullName evidence="1">Urocanate hydratase</fullName>
        <shortName evidence="1">Urocanase</shortName>
        <ecNumber evidence="1">4.2.1.49</ecNumber>
    </recommendedName>
    <alternativeName>
        <fullName evidence="1">Imidazolonepropionate hydrolase</fullName>
    </alternativeName>
</protein>
<evidence type="ECO:0000255" key="1">
    <source>
        <dbReference type="HAMAP-Rule" id="MF_00577"/>
    </source>
</evidence>
<evidence type="ECO:0000256" key="2">
    <source>
        <dbReference type="SAM" id="MobiDB-lite"/>
    </source>
</evidence>
<reference key="1">
    <citation type="journal article" date="2005" name="J. Bacteriol.">
        <title>Whole-genome sequence analysis of Pseudomonas syringae pv. phaseolicola 1448A reveals divergence among pathovars in genes involved in virulence and transposition.</title>
        <authorList>
            <person name="Joardar V."/>
            <person name="Lindeberg M."/>
            <person name="Jackson R.W."/>
            <person name="Selengut J."/>
            <person name="Dodson R."/>
            <person name="Brinkac L.M."/>
            <person name="Daugherty S.C."/>
            <person name="DeBoy R.T."/>
            <person name="Durkin A.S."/>
            <person name="Gwinn Giglio M."/>
            <person name="Madupu R."/>
            <person name="Nelson W.C."/>
            <person name="Rosovitz M.J."/>
            <person name="Sullivan S.A."/>
            <person name="Crabtree J."/>
            <person name="Creasy T."/>
            <person name="Davidsen T.M."/>
            <person name="Haft D.H."/>
            <person name="Zafar N."/>
            <person name="Zhou L."/>
            <person name="Halpin R."/>
            <person name="Holley T."/>
            <person name="Khouri H.M."/>
            <person name="Feldblyum T.V."/>
            <person name="White O."/>
            <person name="Fraser C.M."/>
            <person name="Chatterjee A.K."/>
            <person name="Cartinhour S."/>
            <person name="Schneider D."/>
            <person name="Mansfield J.W."/>
            <person name="Collmer A."/>
            <person name="Buell R."/>
        </authorList>
    </citation>
    <scope>NUCLEOTIDE SEQUENCE [LARGE SCALE GENOMIC DNA]</scope>
    <source>
        <strain>1448A / Race 6</strain>
    </source>
</reference>
<dbReference type="EC" id="4.2.1.49" evidence="1"/>
<dbReference type="EMBL" id="CP000058">
    <property type="protein sequence ID" value="AAZ37644.1"/>
    <property type="molecule type" value="Genomic_DNA"/>
</dbReference>
<dbReference type="SMR" id="Q48CE0"/>
<dbReference type="KEGG" id="psp:PSPPH_4860"/>
<dbReference type="eggNOG" id="COG2987">
    <property type="taxonomic scope" value="Bacteria"/>
</dbReference>
<dbReference type="HOGENOM" id="CLU_018868_0_1_6"/>
<dbReference type="UniPathway" id="UPA00379">
    <property type="reaction ID" value="UER00550"/>
</dbReference>
<dbReference type="Proteomes" id="UP000000551">
    <property type="component" value="Chromosome"/>
</dbReference>
<dbReference type="GO" id="GO:0005737">
    <property type="term" value="C:cytoplasm"/>
    <property type="evidence" value="ECO:0007669"/>
    <property type="project" value="UniProtKB-SubCell"/>
</dbReference>
<dbReference type="GO" id="GO:0016153">
    <property type="term" value="F:urocanate hydratase activity"/>
    <property type="evidence" value="ECO:0007669"/>
    <property type="project" value="UniProtKB-UniRule"/>
</dbReference>
<dbReference type="GO" id="GO:0019556">
    <property type="term" value="P:L-histidine catabolic process to glutamate and formamide"/>
    <property type="evidence" value="ECO:0007669"/>
    <property type="project" value="UniProtKB-UniPathway"/>
</dbReference>
<dbReference type="GO" id="GO:0019557">
    <property type="term" value="P:L-histidine catabolic process to glutamate and formate"/>
    <property type="evidence" value="ECO:0007669"/>
    <property type="project" value="UniProtKB-UniPathway"/>
</dbReference>
<dbReference type="FunFam" id="3.40.50.10730:FF:000001">
    <property type="entry name" value="Urocanate hydratase"/>
    <property type="match status" value="1"/>
</dbReference>
<dbReference type="Gene3D" id="3.40.50.10730">
    <property type="entry name" value="Urocanase like domains"/>
    <property type="match status" value="1"/>
</dbReference>
<dbReference type="Gene3D" id="3.40.1770.10">
    <property type="entry name" value="Urocanase superfamily"/>
    <property type="match status" value="1"/>
</dbReference>
<dbReference type="HAMAP" id="MF_00577">
    <property type="entry name" value="HutU"/>
    <property type="match status" value="1"/>
</dbReference>
<dbReference type="InterPro" id="IPR055351">
    <property type="entry name" value="Urocanase"/>
</dbReference>
<dbReference type="InterPro" id="IPR023637">
    <property type="entry name" value="Urocanase-like"/>
</dbReference>
<dbReference type="InterPro" id="IPR035401">
    <property type="entry name" value="Urocanase_C"/>
</dbReference>
<dbReference type="InterPro" id="IPR038364">
    <property type="entry name" value="Urocanase_central_sf"/>
</dbReference>
<dbReference type="InterPro" id="IPR023636">
    <property type="entry name" value="Urocanase_CS"/>
</dbReference>
<dbReference type="InterPro" id="IPR035400">
    <property type="entry name" value="Urocanase_N"/>
</dbReference>
<dbReference type="InterPro" id="IPR035085">
    <property type="entry name" value="Urocanase_Rossmann-like"/>
</dbReference>
<dbReference type="InterPro" id="IPR036190">
    <property type="entry name" value="Urocanase_sf"/>
</dbReference>
<dbReference type="NCBIfam" id="TIGR01228">
    <property type="entry name" value="hutU"/>
    <property type="match status" value="1"/>
</dbReference>
<dbReference type="NCBIfam" id="NF003820">
    <property type="entry name" value="PRK05414.1"/>
    <property type="match status" value="1"/>
</dbReference>
<dbReference type="PANTHER" id="PTHR12216">
    <property type="entry name" value="UROCANATE HYDRATASE"/>
    <property type="match status" value="1"/>
</dbReference>
<dbReference type="PANTHER" id="PTHR12216:SF4">
    <property type="entry name" value="UROCANATE HYDRATASE"/>
    <property type="match status" value="1"/>
</dbReference>
<dbReference type="Pfam" id="PF01175">
    <property type="entry name" value="Urocanase"/>
    <property type="match status" value="1"/>
</dbReference>
<dbReference type="Pfam" id="PF17392">
    <property type="entry name" value="Urocanase_C"/>
    <property type="match status" value="1"/>
</dbReference>
<dbReference type="Pfam" id="PF17391">
    <property type="entry name" value="Urocanase_N"/>
    <property type="match status" value="1"/>
</dbReference>
<dbReference type="PIRSF" id="PIRSF001423">
    <property type="entry name" value="Urocanate_hydrat"/>
    <property type="match status" value="1"/>
</dbReference>
<dbReference type="SUPFAM" id="SSF111326">
    <property type="entry name" value="Urocanase"/>
    <property type="match status" value="1"/>
</dbReference>
<dbReference type="PROSITE" id="PS01233">
    <property type="entry name" value="UROCANASE"/>
    <property type="match status" value="1"/>
</dbReference>
<organism>
    <name type="scientific">Pseudomonas savastanoi pv. phaseolicola (strain 1448A / Race 6)</name>
    <name type="common">Pseudomonas syringae pv. phaseolicola (strain 1448A / Race 6)</name>
    <dbReference type="NCBI Taxonomy" id="264730"/>
    <lineage>
        <taxon>Bacteria</taxon>
        <taxon>Pseudomonadati</taxon>
        <taxon>Pseudomonadota</taxon>
        <taxon>Gammaproteobacteria</taxon>
        <taxon>Pseudomonadales</taxon>
        <taxon>Pseudomonadaceae</taxon>
        <taxon>Pseudomonas</taxon>
    </lineage>
</organism>
<gene>
    <name evidence="1" type="primary">hutU</name>
    <name type="ordered locus">PSPPH_4860</name>
</gene>
<feature type="chain" id="PRO_1000025138" description="Urocanate hydratase">
    <location>
        <begin position="1"/>
        <end position="565"/>
    </location>
</feature>
<feature type="region of interest" description="Disordered" evidence="2">
    <location>
        <begin position="453"/>
        <end position="472"/>
    </location>
</feature>
<feature type="compositionally biased region" description="Basic and acidic residues" evidence="2">
    <location>
        <begin position="463"/>
        <end position="472"/>
    </location>
</feature>
<feature type="active site" evidence="1">
    <location>
        <position position="419"/>
    </location>
</feature>
<feature type="binding site" evidence="1">
    <location>
        <begin position="61"/>
        <end position="62"/>
    </location>
    <ligand>
        <name>NAD(+)</name>
        <dbReference type="ChEBI" id="CHEBI:57540"/>
    </ligand>
</feature>
<feature type="binding site" evidence="1">
    <location>
        <position position="139"/>
    </location>
    <ligand>
        <name>NAD(+)</name>
        <dbReference type="ChEBI" id="CHEBI:57540"/>
    </ligand>
</feature>
<feature type="binding site" evidence="1">
    <location>
        <begin position="185"/>
        <end position="187"/>
    </location>
    <ligand>
        <name>NAD(+)</name>
        <dbReference type="ChEBI" id="CHEBI:57540"/>
    </ligand>
</feature>
<feature type="binding site" evidence="1">
    <location>
        <position position="205"/>
    </location>
    <ligand>
        <name>NAD(+)</name>
        <dbReference type="ChEBI" id="CHEBI:57540"/>
    </ligand>
</feature>
<feature type="binding site" evidence="1">
    <location>
        <position position="210"/>
    </location>
    <ligand>
        <name>NAD(+)</name>
        <dbReference type="ChEBI" id="CHEBI:57540"/>
    </ligand>
</feature>
<feature type="binding site" evidence="1">
    <location>
        <begin position="251"/>
        <end position="252"/>
    </location>
    <ligand>
        <name>NAD(+)</name>
        <dbReference type="ChEBI" id="CHEBI:57540"/>
    </ligand>
</feature>
<feature type="binding site" evidence="1">
    <location>
        <begin position="272"/>
        <end position="276"/>
    </location>
    <ligand>
        <name>NAD(+)</name>
        <dbReference type="ChEBI" id="CHEBI:57540"/>
    </ligand>
</feature>
<feature type="binding site" evidence="1">
    <location>
        <begin position="282"/>
        <end position="283"/>
    </location>
    <ligand>
        <name>NAD(+)</name>
        <dbReference type="ChEBI" id="CHEBI:57540"/>
    </ligand>
</feature>
<feature type="binding site" evidence="1">
    <location>
        <position position="331"/>
    </location>
    <ligand>
        <name>NAD(+)</name>
        <dbReference type="ChEBI" id="CHEBI:57540"/>
    </ligand>
</feature>
<feature type="binding site" evidence="1">
    <location>
        <position position="501"/>
    </location>
    <ligand>
        <name>NAD(+)</name>
        <dbReference type="ChEBI" id="CHEBI:57540"/>
    </ligand>
</feature>
<accession>Q48CE0</accession>
<proteinExistence type="inferred from homology"/>